<organism>
    <name type="scientific">Homo sapiens</name>
    <name type="common">Human</name>
    <dbReference type="NCBI Taxonomy" id="9606"/>
    <lineage>
        <taxon>Eukaryota</taxon>
        <taxon>Metazoa</taxon>
        <taxon>Chordata</taxon>
        <taxon>Craniata</taxon>
        <taxon>Vertebrata</taxon>
        <taxon>Euteleostomi</taxon>
        <taxon>Mammalia</taxon>
        <taxon>Eutheria</taxon>
        <taxon>Euarchontoglires</taxon>
        <taxon>Primates</taxon>
        <taxon>Haplorrhini</taxon>
        <taxon>Catarrhini</taxon>
        <taxon>Hominidae</taxon>
        <taxon>Homo</taxon>
    </lineage>
</organism>
<reference key="1">
    <citation type="journal article" date="2003" name="Genome Res.">
        <title>The secreted protein discovery initiative (SPDI), a large-scale effort to identify novel human secreted and transmembrane proteins: a bioinformatics assessment.</title>
        <authorList>
            <person name="Clark H.F."/>
            <person name="Gurney A.L."/>
            <person name="Abaya E."/>
            <person name="Baker K."/>
            <person name="Baldwin D.T."/>
            <person name="Brush J."/>
            <person name="Chen J."/>
            <person name="Chow B."/>
            <person name="Chui C."/>
            <person name="Crowley C."/>
            <person name="Currell B."/>
            <person name="Deuel B."/>
            <person name="Dowd P."/>
            <person name="Eaton D."/>
            <person name="Foster J.S."/>
            <person name="Grimaldi C."/>
            <person name="Gu Q."/>
            <person name="Hass P.E."/>
            <person name="Heldens S."/>
            <person name="Huang A."/>
            <person name="Kim H.S."/>
            <person name="Klimowski L."/>
            <person name="Jin Y."/>
            <person name="Johnson S."/>
            <person name="Lee J."/>
            <person name="Lewis L."/>
            <person name="Liao D."/>
            <person name="Mark M.R."/>
            <person name="Robbie E."/>
            <person name="Sanchez C."/>
            <person name="Schoenfeld J."/>
            <person name="Seshagiri S."/>
            <person name="Simmons L."/>
            <person name="Singh J."/>
            <person name="Smith V."/>
            <person name="Stinson J."/>
            <person name="Vagts A."/>
            <person name="Vandlen R.L."/>
            <person name="Watanabe C."/>
            <person name="Wieand D."/>
            <person name="Woods K."/>
            <person name="Xie M.-H."/>
            <person name="Yansura D.G."/>
            <person name="Yi S."/>
            <person name="Yu G."/>
            <person name="Yuan J."/>
            <person name="Zhang M."/>
            <person name="Zhang Z."/>
            <person name="Goddard A.D."/>
            <person name="Wood W.I."/>
            <person name="Godowski P.J."/>
            <person name="Gray A.M."/>
        </authorList>
    </citation>
    <scope>NUCLEOTIDE SEQUENCE [LARGE SCALE MRNA] (ISOFORM 1)</scope>
</reference>
<reference key="2">
    <citation type="journal article" date="1999" name="Nature">
        <title>The DNA sequence of human chromosome 22.</title>
        <authorList>
            <person name="Dunham I."/>
            <person name="Hunt A.R."/>
            <person name="Collins J.E."/>
            <person name="Bruskiewich R."/>
            <person name="Beare D.M."/>
            <person name="Clamp M."/>
            <person name="Smink L.J."/>
            <person name="Ainscough R."/>
            <person name="Almeida J.P."/>
            <person name="Babbage A.K."/>
            <person name="Bagguley C."/>
            <person name="Bailey J."/>
            <person name="Barlow K.F."/>
            <person name="Bates K.N."/>
            <person name="Beasley O.P."/>
            <person name="Bird C.P."/>
            <person name="Blakey S.E."/>
            <person name="Bridgeman A.M."/>
            <person name="Buck D."/>
            <person name="Burgess J."/>
            <person name="Burrill W.D."/>
            <person name="Burton J."/>
            <person name="Carder C."/>
            <person name="Carter N.P."/>
            <person name="Chen Y."/>
            <person name="Clark G."/>
            <person name="Clegg S.M."/>
            <person name="Cobley V.E."/>
            <person name="Cole C.G."/>
            <person name="Collier R.E."/>
            <person name="Connor R."/>
            <person name="Conroy D."/>
            <person name="Corby N.R."/>
            <person name="Coville G.J."/>
            <person name="Cox A.V."/>
            <person name="Davis J."/>
            <person name="Dawson E."/>
            <person name="Dhami P.D."/>
            <person name="Dockree C."/>
            <person name="Dodsworth S.J."/>
            <person name="Durbin R.M."/>
            <person name="Ellington A.G."/>
            <person name="Evans K.L."/>
            <person name="Fey J.M."/>
            <person name="Fleming K."/>
            <person name="French L."/>
            <person name="Garner A.A."/>
            <person name="Gilbert J.G.R."/>
            <person name="Goward M.E."/>
            <person name="Grafham D.V."/>
            <person name="Griffiths M.N.D."/>
            <person name="Hall C."/>
            <person name="Hall R.E."/>
            <person name="Hall-Tamlyn G."/>
            <person name="Heathcott R.W."/>
            <person name="Ho S."/>
            <person name="Holmes S."/>
            <person name="Hunt S.E."/>
            <person name="Jones M.C."/>
            <person name="Kershaw J."/>
            <person name="Kimberley A.M."/>
            <person name="King A."/>
            <person name="Laird G.K."/>
            <person name="Langford C.F."/>
            <person name="Leversha M.A."/>
            <person name="Lloyd C."/>
            <person name="Lloyd D.M."/>
            <person name="Martyn I.D."/>
            <person name="Mashreghi-Mohammadi M."/>
            <person name="Matthews L.H."/>
            <person name="Mccann O.T."/>
            <person name="Mcclay J."/>
            <person name="Mclaren S."/>
            <person name="McMurray A.A."/>
            <person name="Milne S.A."/>
            <person name="Mortimore B.J."/>
            <person name="Odell C.N."/>
            <person name="Pavitt R."/>
            <person name="Pearce A.V."/>
            <person name="Pearson D."/>
            <person name="Phillimore B.J.C.T."/>
            <person name="Phillips S.H."/>
            <person name="Plumb R.W."/>
            <person name="Ramsay H."/>
            <person name="Ramsey Y."/>
            <person name="Rogers L."/>
            <person name="Ross M.T."/>
            <person name="Scott C.E."/>
            <person name="Sehra H.K."/>
            <person name="Skuce C.D."/>
            <person name="Smalley S."/>
            <person name="Smith M.L."/>
            <person name="Soderlund C."/>
            <person name="Spragon L."/>
            <person name="Steward C.A."/>
            <person name="Sulston J.E."/>
            <person name="Swann R.M."/>
            <person name="Vaudin M."/>
            <person name="Wall M."/>
            <person name="Wallis J.M."/>
            <person name="Whiteley M.N."/>
            <person name="Willey D.L."/>
            <person name="Williams L."/>
            <person name="Williams S.A."/>
            <person name="Williamson H."/>
            <person name="Wilmer T.E."/>
            <person name="Wilming L."/>
            <person name="Wright C.L."/>
            <person name="Hubbard T."/>
            <person name="Bentley D.R."/>
            <person name="Beck S."/>
            <person name="Rogers J."/>
            <person name="Shimizu N."/>
            <person name="Minoshima S."/>
            <person name="Kawasaki K."/>
            <person name="Sasaki T."/>
            <person name="Asakawa S."/>
            <person name="Kudoh J."/>
            <person name="Shintani A."/>
            <person name="Shibuya K."/>
            <person name="Yoshizaki Y."/>
            <person name="Aoki N."/>
            <person name="Mitsuyama S."/>
            <person name="Roe B.A."/>
            <person name="Chen F."/>
            <person name="Chu L."/>
            <person name="Crabtree J."/>
            <person name="Deschamps S."/>
            <person name="Do A."/>
            <person name="Do T."/>
            <person name="Dorman A."/>
            <person name="Fang F."/>
            <person name="Fu Y."/>
            <person name="Hu P."/>
            <person name="Hua A."/>
            <person name="Kenton S."/>
            <person name="Lai H."/>
            <person name="Lao H.I."/>
            <person name="Lewis J."/>
            <person name="Lewis S."/>
            <person name="Lin S.-P."/>
            <person name="Loh P."/>
            <person name="Malaj E."/>
            <person name="Nguyen T."/>
            <person name="Pan H."/>
            <person name="Phan S."/>
            <person name="Qi S."/>
            <person name="Qian Y."/>
            <person name="Ray L."/>
            <person name="Ren Q."/>
            <person name="Shaull S."/>
            <person name="Sloan D."/>
            <person name="Song L."/>
            <person name="Wang Q."/>
            <person name="Wang Y."/>
            <person name="Wang Z."/>
            <person name="White J."/>
            <person name="Willingham D."/>
            <person name="Wu H."/>
            <person name="Yao Z."/>
            <person name="Zhan M."/>
            <person name="Zhang G."/>
            <person name="Chissoe S."/>
            <person name="Murray J."/>
            <person name="Miller N."/>
            <person name="Minx P."/>
            <person name="Fulton R."/>
            <person name="Johnson D."/>
            <person name="Bemis G."/>
            <person name="Bentley D."/>
            <person name="Bradshaw H."/>
            <person name="Bourne S."/>
            <person name="Cordes M."/>
            <person name="Du Z."/>
            <person name="Fulton L."/>
            <person name="Goela D."/>
            <person name="Graves T."/>
            <person name="Hawkins J."/>
            <person name="Hinds K."/>
            <person name="Kemp K."/>
            <person name="Latreille P."/>
            <person name="Layman D."/>
            <person name="Ozersky P."/>
            <person name="Rohlfing T."/>
            <person name="Scheet P."/>
            <person name="Walker C."/>
            <person name="Wamsley A."/>
            <person name="Wohldmann P."/>
            <person name="Pepin K."/>
            <person name="Nelson J."/>
            <person name="Korf I."/>
            <person name="Bedell J.A."/>
            <person name="Hillier L.W."/>
            <person name="Mardis E."/>
            <person name="Waterston R."/>
            <person name="Wilson R."/>
            <person name="Emanuel B.S."/>
            <person name="Shaikh T."/>
            <person name="Kurahashi H."/>
            <person name="Saitta S."/>
            <person name="Budarf M.L."/>
            <person name="McDermid H.E."/>
            <person name="Johnson A."/>
            <person name="Wong A.C.C."/>
            <person name="Morrow B.E."/>
            <person name="Edelmann L."/>
            <person name="Kim U.J."/>
            <person name="Shizuya H."/>
            <person name="Simon M.I."/>
            <person name="Dumanski J.P."/>
            <person name="Peyrard M."/>
            <person name="Kedra D."/>
            <person name="Seroussi E."/>
            <person name="Fransson I."/>
            <person name="Tapia I."/>
            <person name="Bruder C.E."/>
            <person name="O'Brien K.P."/>
            <person name="Wilkinson P."/>
            <person name="Bodenteich A."/>
            <person name="Hartman K."/>
            <person name="Hu X."/>
            <person name="Khan A.S."/>
            <person name="Lane L."/>
            <person name="Tilahun Y."/>
            <person name="Wright H."/>
        </authorList>
    </citation>
    <scope>NUCLEOTIDE SEQUENCE [LARGE SCALE GENOMIC DNA]</scope>
</reference>
<reference key="3">
    <citation type="journal article" date="2004" name="Genome Res.">
        <title>The status, quality, and expansion of the NIH full-length cDNA project: the Mammalian Gene Collection (MGC).</title>
        <authorList>
            <consortium name="The MGC Project Team"/>
        </authorList>
    </citation>
    <scope>NUCLEOTIDE SEQUENCE [LARGE SCALE MRNA] (ISOFORM 2)</scope>
    <source>
        <tissue>Eye</tissue>
    </source>
</reference>
<reference key="4">
    <citation type="journal article" date="2011" name="Nat. Struct. Mol. Biol.">
        <title>Pinkbar is an epithelial-specific BAR domain protein that generates planar membrane structures.</title>
        <authorList>
            <person name="Pykalainen A."/>
            <person name="Boczkowska M."/>
            <person name="Zhao H."/>
            <person name="Saarikangas J."/>
            <person name="Rebowski G."/>
            <person name="Jansen M."/>
            <person name="Hakanen J."/>
            <person name="Koskela E.V."/>
            <person name="Peranen J."/>
            <person name="Vihinen H."/>
            <person name="Jokitalo E."/>
            <person name="Salminen M."/>
            <person name="Ikonen E."/>
            <person name="Dominguez R."/>
            <person name="Lappalainen P."/>
        </authorList>
    </citation>
    <scope>SUBCELLULAR LOCATION</scope>
    <scope>TISSUE SPECIFICITY</scope>
</reference>
<evidence type="ECO:0000250" key="1"/>
<evidence type="ECO:0000250" key="2">
    <source>
        <dbReference type="UniProtKB" id="Q80Y61"/>
    </source>
</evidence>
<evidence type="ECO:0000255" key="3">
    <source>
        <dbReference type="PROSITE-ProRule" id="PRU00192"/>
    </source>
</evidence>
<evidence type="ECO:0000255" key="4">
    <source>
        <dbReference type="PROSITE-ProRule" id="PRU00668"/>
    </source>
</evidence>
<evidence type="ECO:0000256" key="5">
    <source>
        <dbReference type="SAM" id="MobiDB-lite"/>
    </source>
</evidence>
<evidence type="ECO:0000269" key="6">
    <source>
    </source>
</evidence>
<evidence type="ECO:0000303" key="7">
    <source>
    </source>
</evidence>
<evidence type="ECO:0000305" key="8"/>
<evidence type="ECO:0000312" key="9">
    <source>
        <dbReference type="HGNC" id="HGNC:26203"/>
    </source>
</evidence>
<proteinExistence type="evidence at protein level"/>
<dbReference type="EMBL" id="AY358164">
    <property type="protein sequence ID" value="AAQ88531.1"/>
    <property type="molecule type" value="mRNA"/>
</dbReference>
<dbReference type="EMBL" id="AL022322">
    <property type="status" value="NOT_ANNOTATED_CDS"/>
    <property type="molecule type" value="Genomic_DNA"/>
</dbReference>
<dbReference type="EMBL" id="AL031587">
    <property type="status" value="NOT_ANNOTATED_CDS"/>
    <property type="molecule type" value="Genomic_DNA"/>
</dbReference>
<dbReference type="EMBL" id="BC015619">
    <property type="protein sequence ID" value="AAH15619.1"/>
    <property type="molecule type" value="mRNA"/>
</dbReference>
<dbReference type="CCDS" id="CCDS43018.1">
    <molecule id="Q6UXY1-1"/>
</dbReference>
<dbReference type="RefSeq" id="NP_079321.3">
    <molecule id="Q6UXY1-1"/>
    <property type="nucleotide sequence ID" value="NM_025045.5"/>
</dbReference>
<dbReference type="RefSeq" id="XP_005261808.1">
    <molecule id="Q6UXY1-1"/>
    <property type="nucleotide sequence ID" value="XM_005261751.5"/>
</dbReference>
<dbReference type="RefSeq" id="XP_011528681.1">
    <molecule id="Q6UXY1-2"/>
    <property type="nucleotide sequence ID" value="XM_011530379.4"/>
</dbReference>
<dbReference type="RefSeq" id="XP_054181895.1">
    <molecule id="Q6UXY1-2"/>
    <property type="nucleotide sequence ID" value="XM_054325920.1"/>
</dbReference>
<dbReference type="RefSeq" id="XP_054181901.1">
    <molecule id="Q6UXY1-1"/>
    <property type="nucleotide sequence ID" value="XM_054325926.1"/>
</dbReference>
<dbReference type="SMR" id="Q6UXY1"/>
<dbReference type="BioGRID" id="123120">
    <property type="interactions" value="7"/>
</dbReference>
<dbReference type="FunCoup" id="Q6UXY1">
    <property type="interactions" value="21"/>
</dbReference>
<dbReference type="STRING" id="9606.ENSP00000371085"/>
<dbReference type="GlyGen" id="Q6UXY1">
    <property type="glycosylation" value="1 site, 1 O-linked glycan (1 site)"/>
</dbReference>
<dbReference type="iPTMnet" id="Q6UXY1"/>
<dbReference type="PhosphoSitePlus" id="Q6UXY1"/>
<dbReference type="BioMuta" id="BAIAP2L2"/>
<dbReference type="DMDM" id="74749434"/>
<dbReference type="jPOST" id="Q6UXY1"/>
<dbReference type="MassIVE" id="Q6UXY1"/>
<dbReference type="PaxDb" id="9606-ENSP00000371085"/>
<dbReference type="PeptideAtlas" id="Q6UXY1"/>
<dbReference type="ProteomicsDB" id="67675">
    <molecule id="Q6UXY1-1"/>
</dbReference>
<dbReference type="ProteomicsDB" id="67676">
    <molecule id="Q6UXY1-2"/>
</dbReference>
<dbReference type="ABCD" id="Q6UXY1">
    <property type="antibodies" value="4 sequenced antibodies"/>
</dbReference>
<dbReference type="Antibodypedia" id="301">
    <property type="antibodies" value="136 antibodies from 25 providers"/>
</dbReference>
<dbReference type="DNASU" id="80115"/>
<dbReference type="Ensembl" id="ENST00000381669.8">
    <molecule id="Q6UXY1-1"/>
    <property type="protein sequence ID" value="ENSP00000371085.3"/>
    <property type="gene ID" value="ENSG00000128298.18"/>
</dbReference>
<dbReference type="GeneID" id="80115"/>
<dbReference type="KEGG" id="hsa:80115"/>
<dbReference type="MANE-Select" id="ENST00000381669.8">
    <property type="protein sequence ID" value="ENSP00000371085.3"/>
    <property type="RefSeq nucleotide sequence ID" value="NM_025045.6"/>
    <property type="RefSeq protein sequence ID" value="NP_079321.3"/>
</dbReference>
<dbReference type="UCSC" id="uc003auw.4">
    <molecule id="Q6UXY1-1"/>
    <property type="organism name" value="human"/>
</dbReference>
<dbReference type="AGR" id="HGNC:26203"/>
<dbReference type="CTD" id="80115"/>
<dbReference type="DisGeNET" id="80115"/>
<dbReference type="GeneCards" id="BAIAP2L2"/>
<dbReference type="HGNC" id="HGNC:26203">
    <property type="gene designation" value="BAIAP2L2"/>
</dbReference>
<dbReference type="HPA" id="ENSG00000128298">
    <property type="expression patterns" value="Group enriched (intestine, kidney)"/>
</dbReference>
<dbReference type="MIM" id="617536">
    <property type="type" value="gene"/>
</dbReference>
<dbReference type="neXtProt" id="NX_Q6UXY1"/>
<dbReference type="OpenTargets" id="ENSG00000128298"/>
<dbReference type="PharmGKB" id="PA142672563"/>
<dbReference type="VEuPathDB" id="HostDB:ENSG00000128298"/>
<dbReference type="eggNOG" id="ENOG502QW6V">
    <property type="taxonomic scope" value="Eukaryota"/>
</dbReference>
<dbReference type="GeneTree" id="ENSGT00940000153560"/>
<dbReference type="HOGENOM" id="CLU_025877_1_1_1"/>
<dbReference type="InParanoid" id="Q6UXY1"/>
<dbReference type="OMA" id="QNLMEHF"/>
<dbReference type="OrthoDB" id="9944156at2759"/>
<dbReference type="PAN-GO" id="Q6UXY1">
    <property type="GO annotations" value="6 GO annotations based on evolutionary models"/>
</dbReference>
<dbReference type="PhylomeDB" id="Q6UXY1"/>
<dbReference type="TreeFam" id="TF325648"/>
<dbReference type="PathwayCommons" id="Q6UXY1"/>
<dbReference type="Reactome" id="R-HSA-9035034">
    <property type="pathway name" value="RHOF GTPase cycle"/>
</dbReference>
<dbReference type="BioGRID-ORCS" id="80115">
    <property type="hits" value="14 hits in 1151 CRISPR screens"/>
</dbReference>
<dbReference type="ChiTaRS" id="BAIAP2L2">
    <property type="organism name" value="human"/>
</dbReference>
<dbReference type="GenomeRNAi" id="80115"/>
<dbReference type="Pharos" id="Q6UXY1">
    <property type="development level" value="Tbio"/>
</dbReference>
<dbReference type="PRO" id="PR:Q6UXY1"/>
<dbReference type="Proteomes" id="UP000005640">
    <property type="component" value="Chromosome 22"/>
</dbReference>
<dbReference type="RNAct" id="Q6UXY1">
    <property type="molecule type" value="protein"/>
</dbReference>
<dbReference type="Bgee" id="ENSG00000128298">
    <property type="expression patterns" value="Expressed in mucosa of transverse colon and 127 other cell types or tissues"/>
</dbReference>
<dbReference type="ExpressionAtlas" id="Q6UXY1">
    <property type="expression patterns" value="baseline and differential"/>
</dbReference>
<dbReference type="GO" id="GO:0044291">
    <property type="term" value="C:cell-cell contact zone"/>
    <property type="evidence" value="ECO:0000314"/>
    <property type="project" value="UniProtKB"/>
</dbReference>
<dbReference type="GO" id="GO:0071439">
    <property type="term" value="C:clathrin complex"/>
    <property type="evidence" value="ECO:0000314"/>
    <property type="project" value="dictyBase"/>
</dbReference>
<dbReference type="GO" id="GO:0030659">
    <property type="term" value="C:cytoplasmic vesicle membrane"/>
    <property type="evidence" value="ECO:0007669"/>
    <property type="project" value="UniProtKB-SubCell"/>
</dbReference>
<dbReference type="GO" id="GO:0005829">
    <property type="term" value="C:cytosol"/>
    <property type="evidence" value="ECO:0000318"/>
    <property type="project" value="GO_Central"/>
</dbReference>
<dbReference type="GO" id="GO:0005654">
    <property type="term" value="C:nucleoplasm"/>
    <property type="evidence" value="ECO:0000318"/>
    <property type="project" value="GO_Central"/>
</dbReference>
<dbReference type="GO" id="GO:0005886">
    <property type="term" value="C:plasma membrane"/>
    <property type="evidence" value="ECO:0007669"/>
    <property type="project" value="UniProtKB-SubCell"/>
</dbReference>
<dbReference type="GO" id="GO:0012506">
    <property type="term" value="C:vesicle membrane"/>
    <property type="evidence" value="ECO:0000314"/>
    <property type="project" value="UniProtKB"/>
</dbReference>
<dbReference type="GO" id="GO:0005543">
    <property type="term" value="F:phospholipid binding"/>
    <property type="evidence" value="ECO:0000250"/>
    <property type="project" value="UniProtKB"/>
</dbReference>
<dbReference type="GO" id="GO:0051764">
    <property type="term" value="P:actin crosslink formation"/>
    <property type="evidence" value="ECO:0000318"/>
    <property type="project" value="GO_Central"/>
</dbReference>
<dbReference type="GO" id="GO:0051017">
    <property type="term" value="P:actin filament bundle assembly"/>
    <property type="evidence" value="ECO:0000318"/>
    <property type="project" value="GO_Central"/>
</dbReference>
<dbReference type="GO" id="GO:0061024">
    <property type="term" value="P:membrane organization"/>
    <property type="evidence" value="ECO:0000250"/>
    <property type="project" value="UniProtKB"/>
</dbReference>
<dbReference type="GO" id="GO:0007009">
    <property type="term" value="P:plasma membrane organization"/>
    <property type="evidence" value="ECO:0007669"/>
    <property type="project" value="InterPro"/>
</dbReference>
<dbReference type="GO" id="GO:0030838">
    <property type="term" value="P:positive regulation of actin filament polymerization"/>
    <property type="evidence" value="ECO:0000318"/>
    <property type="project" value="GO_Central"/>
</dbReference>
<dbReference type="CDD" id="cd07644">
    <property type="entry name" value="I-BAR_IMD_BAIAP2L2"/>
    <property type="match status" value="1"/>
</dbReference>
<dbReference type="CDD" id="cd11914">
    <property type="entry name" value="SH3_BAIAP2L2"/>
    <property type="match status" value="1"/>
</dbReference>
<dbReference type="FunFam" id="1.20.1270.60:FF:000056">
    <property type="entry name" value="brain-specific angiogenesis inhibitor 1-associated protein 2-like protein 2"/>
    <property type="match status" value="1"/>
</dbReference>
<dbReference type="FunFam" id="2.30.30.40:FF:000185">
    <property type="entry name" value="brain-specific angiogenesis inhibitor 1-associated protein 2-like protein 2"/>
    <property type="match status" value="1"/>
</dbReference>
<dbReference type="Gene3D" id="1.20.1270.60">
    <property type="entry name" value="Arfaptin homology (AH) domain/BAR domain"/>
    <property type="match status" value="1"/>
</dbReference>
<dbReference type="Gene3D" id="2.30.30.40">
    <property type="entry name" value="SH3 Domains"/>
    <property type="match status" value="1"/>
</dbReference>
<dbReference type="InterPro" id="IPR027267">
    <property type="entry name" value="AH/BAR_dom_sf"/>
</dbReference>
<dbReference type="InterPro" id="IPR030126">
    <property type="entry name" value="Baiap2l2_I-BAR_dom"/>
</dbReference>
<dbReference type="InterPro" id="IPR013606">
    <property type="entry name" value="I-BAR_dom"/>
</dbReference>
<dbReference type="InterPro" id="IPR027681">
    <property type="entry name" value="IRSp53/IRTKS/Pinkbar"/>
</dbReference>
<dbReference type="InterPro" id="IPR035593">
    <property type="entry name" value="Pinkbar_SH3"/>
</dbReference>
<dbReference type="InterPro" id="IPR036028">
    <property type="entry name" value="SH3-like_dom_sf"/>
</dbReference>
<dbReference type="InterPro" id="IPR001452">
    <property type="entry name" value="SH3_domain"/>
</dbReference>
<dbReference type="PANTHER" id="PTHR14206">
    <property type="entry name" value="BRAIN-SPECIFIC ANGIOGENESIS INHIBITOR 1-ASSOCIATED PROTEIN 2"/>
    <property type="match status" value="1"/>
</dbReference>
<dbReference type="PANTHER" id="PTHR14206:SF5">
    <property type="entry name" value="BRAIN-SPECIFIC ANGIOGENESIS INHIBITOR 1-ASSOCIATED PROTEIN 2-LIKE PROTEIN 2"/>
    <property type="match status" value="1"/>
</dbReference>
<dbReference type="Pfam" id="PF08397">
    <property type="entry name" value="IMD"/>
    <property type="match status" value="1"/>
</dbReference>
<dbReference type="Pfam" id="PF14604">
    <property type="entry name" value="SH3_9"/>
    <property type="match status" value="1"/>
</dbReference>
<dbReference type="SMART" id="SM00326">
    <property type="entry name" value="SH3"/>
    <property type="match status" value="1"/>
</dbReference>
<dbReference type="SUPFAM" id="SSF103657">
    <property type="entry name" value="BAR/IMD domain-like"/>
    <property type="match status" value="1"/>
</dbReference>
<dbReference type="SUPFAM" id="SSF50044">
    <property type="entry name" value="SH3-domain"/>
    <property type="match status" value="1"/>
</dbReference>
<dbReference type="PROSITE" id="PS51338">
    <property type="entry name" value="IMD"/>
    <property type="match status" value="1"/>
</dbReference>
<dbReference type="PROSITE" id="PS50002">
    <property type="entry name" value="SH3"/>
    <property type="match status" value="1"/>
</dbReference>
<keyword id="KW-0025">Alternative splicing</keyword>
<keyword id="KW-0965">Cell junction</keyword>
<keyword id="KW-1003">Cell membrane</keyword>
<keyword id="KW-0968">Cytoplasmic vesicle</keyword>
<keyword id="KW-0446">Lipid-binding</keyword>
<keyword id="KW-0472">Membrane</keyword>
<keyword id="KW-0597">Phosphoprotein</keyword>
<keyword id="KW-1267">Proteomics identification</keyword>
<keyword id="KW-1185">Reference proteome</keyword>
<keyword id="KW-0728">SH3 domain</keyword>
<protein>
    <recommendedName>
        <fullName evidence="9">BAR/IMD domain-containing adapter protein 2-like 2</fullName>
    </recommendedName>
    <alternativeName>
        <fullName>Brain-specific angiogenesis inhibitor 1-associated protein 2-like protein 2</fullName>
        <shortName>BAI1-associated protein 2-like protein 2</shortName>
    </alternativeName>
    <alternativeName>
        <fullName>Planar intestinal- and kidney-specific BAR domain protein</fullName>
        <shortName>Pinkbar</shortName>
    </alternativeName>
</protein>
<comment type="function">
    <text evidence="1">Phosphoinositides-binding protein that induces the formation of planar or gently curved membrane structures. Binds to phosphoinositides, including to phosphatidylinositol 4,5-bisphosphate (PtdIns(4,5)P2) headgroups. There seems to be no clear preference for a specific phosphoinositide (By similarity).</text>
</comment>
<comment type="subcellular location">
    <subcellularLocation>
        <location evidence="6">Cell membrane</location>
        <topology evidence="6">Peripheral membrane protein</topology>
    </subcellularLocation>
    <subcellularLocation>
        <location evidence="6">Cell junction</location>
    </subcellularLocation>
    <subcellularLocation>
        <location evidence="6">Cytoplasmic vesicle membrane</location>
    </subcellularLocation>
    <text>Localizes to RAB13-positive vesicles and to the plasma membrane at intercellular contacts.</text>
</comment>
<comment type="alternative products">
    <event type="alternative splicing"/>
    <isoform>
        <id>Q6UXY1-1</id>
        <name>1</name>
        <sequence type="displayed"/>
    </isoform>
    <isoform>
        <id>Q6UXY1-2</id>
        <name>2</name>
        <sequence type="described" ref="VSP_021324"/>
    </isoform>
</comment>
<comment type="tissue specificity">
    <text evidence="6">Expressed in the epithelial layer of the intestine (at protein level).</text>
</comment>
<comment type="domain">
    <text evidence="1">The IMD domain consisting of an antiparallel dimer of three-helix bundles, featuring on one side a positively charged. The N-terminal alpha-helix inserts into the lipid bilayer. Also forms homodimers and homooligomers. The residue Trp-141 is essential for oligomer formation (By similarity).</text>
</comment>
<sequence length="529" mass="58987">MAPEMDQFYRSTMAIYKSIMEQFNPALENLVYLGNNYLRAFHALSEAAEVYFSAIQKIGERALQSPTSQILGEILVQMSDTQRHLNSDLEVVVQTFHGGLLQHMEKNTKLDMQFIKDSRQHYELEYRHRAANLEKCMSELWRMERKRDKNVREMKESVNRLHAQMQAFVSESQRAAELEEKRRYRFLAEKHLLLSNTFLQFFGRARGMLQNRVLLWKEQSEASRSPSRAHSPGLLGPALGPPYPSGRLTPTCLDMPPRPLGEFSSPRSRHGSGSYGTEPDARPASQLEPDRRSLPRTPSASSLYSGSAQSSRSNSFGERPGGGGGARRVRALVSHSEGANHTLLRFSAGDVVEVLVPEAQNGWLYGKLEGSSASGWFPEAYVKALEEGPVNPMTPVTPMTSMTSMSPMTPMNPGNELPSRSYPLRGSHSLDDLLDRPGNSIAPSEYWDGQSRSRTPSRVPSRAPSPAPPPLPSSRRSSMGSTAVATDVKKLMSSEQYPPQELFPRGTNPFATVKLRPTITNDRSAPLIR</sequence>
<name>BI2L2_HUMAN</name>
<accession>Q6UXY1</accession>
<accession>B0QYE2</accession>
<accession>Q96BG7</accession>
<feature type="chain" id="PRO_0000256130" description="BAR/IMD domain-containing adapter protein 2-like 2">
    <location>
        <begin position="1"/>
        <end position="529"/>
    </location>
</feature>
<feature type="domain" description="IMD" evidence="4">
    <location>
        <begin position="1"/>
        <end position="239"/>
    </location>
</feature>
<feature type="domain" description="SH3" evidence="3">
    <location>
        <begin position="324"/>
        <end position="387"/>
    </location>
</feature>
<feature type="region of interest" description="Disordered" evidence="5">
    <location>
        <begin position="221"/>
        <end position="327"/>
    </location>
</feature>
<feature type="region of interest" description="Disordered" evidence="5">
    <location>
        <begin position="403"/>
        <end position="510"/>
    </location>
</feature>
<feature type="compositionally biased region" description="Low complexity" evidence="5">
    <location>
        <begin position="299"/>
        <end position="313"/>
    </location>
</feature>
<feature type="compositionally biased region" description="Low complexity" evidence="5">
    <location>
        <begin position="403"/>
        <end position="413"/>
    </location>
</feature>
<feature type="compositionally biased region" description="Low complexity" evidence="5">
    <location>
        <begin position="452"/>
        <end position="462"/>
    </location>
</feature>
<feature type="compositionally biased region" description="Pro residues" evidence="5">
    <location>
        <begin position="463"/>
        <end position="472"/>
    </location>
</feature>
<feature type="modified residue" description="Phosphoserine" evidence="2">
    <location>
        <position position="231"/>
    </location>
</feature>
<feature type="modified residue" description="Phosphoserine" evidence="2">
    <location>
        <position position="272"/>
    </location>
</feature>
<feature type="modified residue" description="Phosphoserine" evidence="2">
    <location>
        <position position="302"/>
    </location>
</feature>
<feature type="modified residue" description="Phosphoserine" evidence="2">
    <location>
        <position position="478"/>
    </location>
</feature>
<feature type="modified residue" description="Phosphoserine" evidence="2">
    <location>
        <position position="481"/>
    </location>
</feature>
<feature type="splice variant" id="VSP_021324" description="In isoform 2." evidence="7">
    <location>
        <begin position="441"/>
        <end position="454"/>
    </location>
</feature>
<feature type="sequence conflict" description="In Ref. 3; AAH15619." evidence="8" ref="3">
    <original>C</original>
    <variation>R</variation>
    <location>
        <position position="252"/>
    </location>
</feature>
<feature type="sequence conflict" description="In Ref. 3; AAH15619." evidence="8" ref="3">
    <original>M</original>
    <variation>MTPM</variation>
    <location>
        <position position="411"/>
    </location>
</feature>
<gene>
    <name type="primary">BAIAP2L2</name>
    <name type="ORF">UNQ9336/PRO34007</name>
</gene>